<name>YPT2_ECOLX</name>
<accession>Q99390</accession>
<organism>
    <name type="scientific">Escherichia coli</name>
    <dbReference type="NCBI Taxonomy" id="562"/>
    <lineage>
        <taxon>Bacteria</taxon>
        <taxon>Pseudomonadati</taxon>
        <taxon>Pseudomonadota</taxon>
        <taxon>Gammaproteobacteria</taxon>
        <taxon>Enterobacterales</taxon>
        <taxon>Enterobacteriaceae</taxon>
        <taxon>Escherichia</taxon>
    </lineage>
</organism>
<dbReference type="EMBL" id="X55815">
    <property type="protein sequence ID" value="CAA39340.1"/>
    <property type="molecule type" value="Genomic_DNA"/>
</dbReference>
<dbReference type="RefSeq" id="NP_957634.1">
    <property type="nucleotide sequence ID" value="NC_005327.1"/>
</dbReference>
<dbReference type="RefSeq" id="WP_000704523.1">
    <property type="nucleotide sequence ID" value="NZ_WWEV01000027.1"/>
</dbReference>
<dbReference type="RefSeq" id="YP_001096503.1">
    <property type="nucleotide sequence ID" value="NC_009133.1"/>
</dbReference>
<dbReference type="RefSeq" id="YP_002456227.1">
    <property type="nucleotide sequence ID" value="NC_011812.1"/>
</dbReference>
<dbReference type="RefSeq" id="YP_003162608.1">
    <property type="nucleotide sequence ID" value="NC_013175.1"/>
</dbReference>
<dbReference type="RefSeq" id="YP_004870087.1">
    <property type="nucleotide sequence ID" value="NC_016039.1"/>
</dbReference>
<dbReference type="RefSeq" id="YP_006952273.1">
    <property type="nucleotide sequence ID" value="NC_019057.1"/>
</dbReference>
<dbReference type="RefSeq" id="YP_006953357.1">
    <property type="nucleotide sequence ID" value="NC_019071.1"/>
</dbReference>
<dbReference type="RefSeq" id="YP_006953455.1">
    <property type="nucleotide sequence ID" value="NC_019072.1"/>
</dbReference>
<dbReference type="RefSeq" id="YP_006953982.1">
    <property type="nucleotide sequence ID" value="NC_019090.1"/>
</dbReference>
<dbReference type="RefSeq" id="YP_006954300.1">
    <property type="nucleotide sequence ID" value="NC_019095.1"/>
</dbReference>
<dbReference type="RefSeq" id="YP_006990794.1">
    <property type="nucleotide sequence ID" value="NC_019424.1"/>
</dbReference>
<dbReference type="RefSeq" id="YP_007447580.1">
    <property type="nucleotide sequence ID" value="NC_020278.2"/>
</dbReference>
<dbReference type="RefSeq" id="YP_009068651.1">
    <property type="nucleotide sequence ID" value="NC_025141.1"/>
</dbReference>
<dbReference type="RefSeq" id="YP_190113.1">
    <property type="nucleotide sequence ID" value="NC_006671.1"/>
</dbReference>
<dbReference type="RefSeq" id="YP_443954.1">
    <property type="nucleotide sequence ID" value="NC_007675.1"/>
</dbReference>
<dbReference type="SMR" id="Q99390"/>
<dbReference type="ESTHER" id="ecoli-ypt1">
    <property type="family name" value="Xaa-Pro-like_dom"/>
</dbReference>
<dbReference type="OMA" id="CPILFCV"/>
<dbReference type="Gene3D" id="1.10.10.800">
    <property type="match status" value="1"/>
</dbReference>
<dbReference type="Gene3D" id="3.40.50.1820">
    <property type="entry name" value="alpha/beta hydrolase"/>
    <property type="match status" value="1"/>
</dbReference>
<dbReference type="InterPro" id="IPR000073">
    <property type="entry name" value="AB_hydrolase_1"/>
</dbReference>
<dbReference type="InterPro" id="IPR029058">
    <property type="entry name" value="AB_hydrolase_fold"/>
</dbReference>
<dbReference type="InterPro" id="IPR051411">
    <property type="entry name" value="Polyketide_trans_af380"/>
</dbReference>
<dbReference type="PANTHER" id="PTHR47751:SF2">
    <property type="entry name" value="DLTD N-TERMINAL DOMAIN PROTEIN (AFU_ORTHOLOGUE AFUA_8G00380)-RELATED"/>
    <property type="match status" value="1"/>
</dbReference>
<dbReference type="PANTHER" id="PTHR47751">
    <property type="entry name" value="SUPERFAMILY HYDROLASE, PUTATIVE (AFU_ORTHOLOGUE AFUA_2G16580)-RELATED"/>
    <property type="match status" value="1"/>
</dbReference>
<dbReference type="Pfam" id="PF00561">
    <property type="entry name" value="Abhydrolase_1"/>
    <property type="match status" value="1"/>
</dbReference>
<dbReference type="SUPFAM" id="SSF53474">
    <property type="entry name" value="alpha/beta-Hydrolases"/>
    <property type="match status" value="1"/>
</dbReference>
<keyword id="KW-0614">Plasmid</keyword>
<geneLocation type="plasmid">
    <name>IncFII R100</name>
    <name>NR1</name>
</geneLocation>
<evidence type="ECO:0000255" key="1"/>
<evidence type="ECO:0000305" key="2"/>
<feature type="chain" id="PRO_0000068540" description="Uncharacterized 31.7 kDa protein in traX-finO intergenic region">
    <location>
        <begin position="1"/>
        <end position="286"/>
    </location>
</feature>
<feature type="domain" description="AB hydrolase-1" evidence="1">
    <location>
        <begin position="26"/>
        <end position="268"/>
    </location>
</feature>
<reference key="1">
    <citation type="journal article" date="1990" name="J. Mol. Biol.">
        <title>Nucleotide sequence of the promoter-distal region of the tra operon of plasmid R100, including traI (DNA helicase I) and traD genes.</title>
        <authorList>
            <person name="Yoshioka Y."/>
            <person name="Fujita Y."/>
            <person name="Ohtsubo E."/>
        </authorList>
    </citation>
    <scope>NUCLEOTIDE SEQUENCE [GENOMIC DNA]</scope>
</reference>
<comment type="similarity">
    <text evidence="2">Belongs to the AB hydrolase superfamily.</text>
</comment>
<proteinExistence type="inferred from homology"/>
<sequence>MKITDHKLSEGIALTFRVPEGNIKHPLIILCHGFCGIRNVLLPCFANAFTEAGFATITFDYRGFGESDGERGRLVPAMQTEDIISVINWAEKQECIDNQRIGLWGTSLGGGHVFSAAAQDQRVKCIVSQLAFADGDVLVTGEMNESERASFLSTLNKMAEKKKNTGKEMFVGVTRVLSDNESKVFFEKVKGQYPEMDIKIPFLTVMETLQYKPAESAAKVQCPVLIVIAGQDSVNPPEQGKALYDAVASGTKELYEEADACHYDIYEGAFFERVAAVQTQWFKKHL</sequence>
<protein>
    <recommendedName>
        <fullName>Uncharacterized 31.7 kDa protein in traX-finO intergenic region</fullName>
        <shortName>ORFC</shortName>
    </recommendedName>
</protein>